<keyword id="KW-0025">Alternative splicing</keyword>
<keyword id="KW-0963">Cytoplasm</keyword>
<keyword id="KW-0343">GTPase activation</keyword>
<keyword id="KW-0597">Phosphoprotein</keyword>
<keyword id="KW-1185">Reference proteome</keyword>
<reference key="1">
    <citation type="journal article" date="2009" name="PLoS Biol.">
        <title>Lineage-specific biology revealed by a finished genome assembly of the mouse.</title>
        <authorList>
            <person name="Church D.M."/>
            <person name="Goodstadt L."/>
            <person name="Hillier L.W."/>
            <person name="Zody M.C."/>
            <person name="Goldstein S."/>
            <person name="She X."/>
            <person name="Bult C.J."/>
            <person name="Agarwala R."/>
            <person name="Cherry J.L."/>
            <person name="DiCuccio M."/>
            <person name="Hlavina W."/>
            <person name="Kapustin Y."/>
            <person name="Meric P."/>
            <person name="Maglott D."/>
            <person name="Birtle Z."/>
            <person name="Marques A.C."/>
            <person name="Graves T."/>
            <person name="Zhou S."/>
            <person name="Teague B."/>
            <person name="Potamousis K."/>
            <person name="Churas C."/>
            <person name="Place M."/>
            <person name="Herschleb J."/>
            <person name="Runnheim R."/>
            <person name="Forrest D."/>
            <person name="Amos-Landgraf J."/>
            <person name="Schwartz D.C."/>
            <person name="Cheng Z."/>
            <person name="Lindblad-Toh K."/>
            <person name="Eichler E.E."/>
            <person name="Ponting C.P."/>
        </authorList>
    </citation>
    <scope>NUCLEOTIDE SEQUENCE [LARGE SCALE GENOMIC DNA]</scope>
    <source>
        <strain>C57BL/6J</strain>
    </source>
</reference>
<reference key="2">
    <citation type="journal article" date="2004" name="Genome Res.">
        <title>The status, quality, and expansion of the NIH full-length cDNA project: the Mammalian Gene Collection (MGC).</title>
        <authorList>
            <consortium name="The MGC Project Team"/>
        </authorList>
    </citation>
    <scope>NUCLEOTIDE SEQUENCE [LARGE SCALE MRNA] (ISOFORM 2)</scope>
</reference>
<reference key="3">
    <citation type="journal article" date="2005" name="Science">
        <title>The transcriptional landscape of the mammalian genome.</title>
        <authorList>
            <person name="Carninci P."/>
            <person name="Kasukawa T."/>
            <person name="Katayama S."/>
            <person name="Gough J."/>
            <person name="Frith M.C."/>
            <person name="Maeda N."/>
            <person name="Oyama R."/>
            <person name="Ravasi T."/>
            <person name="Lenhard B."/>
            <person name="Wells C."/>
            <person name="Kodzius R."/>
            <person name="Shimokawa K."/>
            <person name="Bajic V.B."/>
            <person name="Brenner S.E."/>
            <person name="Batalov S."/>
            <person name="Forrest A.R."/>
            <person name="Zavolan M."/>
            <person name="Davis M.J."/>
            <person name="Wilming L.G."/>
            <person name="Aidinis V."/>
            <person name="Allen J.E."/>
            <person name="Ambesi-Impiombato A."/>
            <person name="Apweiler R."/>
            <person name="Aturaliya R.N."/>
            <person name="Bailey T.L."/>
            <person name="Bansal M."/>
            <person name="Baxter L."/>
            <person name="Beisel K.W."/>
            <person name="Bersano T."/>
            <person name="Bono H."/>
            <person name="Chalk A.M."/>
            <person name="Chiu K.P."/>
            <person name="Choudhary V."/>
            <person name="Christoffels A."/>
            <person name="Clutterbuck D.R."/>
            <person name="Crowe M.L."/>
            <person name="Dalla E."/>
            <person name="Dalrymple B.P."/>
            <person name="de Bono B."/>
            <person name="Della Gatta G."/>
            <person name="di Bernardo D."/>
            <person name="Down T."/>
            <person name="Engstrom P."/>
            <person name="Fagiolini M."/>
            <person name="Faulkner G."/>
            <person name="Fletcher C.F."/>
            <person name="Fukushima T."/>
            <person name="Furuno M."/>
            <person name="Futaki S."/>
            <person name="Gariboldi M."/>
            <person name="Georgii-Hemming P."/>
            <person name="Gingeras T.R."/>
            <person name="Gojobori T."/>
            <person name="Green R.E."/>
            <person name="Gustincich S."/>
            <person name="Harbers M."/>
            <person name="Hayashi Y."/>
            <person name="Hensch T.K."/>
            <person name="Hirokawa N."/>
            <person name="Hill D."/>
            <person name="Huminiecki L."/>
            <person name="Iacono M."/>
            <person name="Ikeo K."/>
            <person name="Iwama A."/>
            <person name="Ishikawa T."/>
            <person name="Jakt M."/>
            <person name="Kanapin A."/>
            <person name="Katoh M."/>
            <person name="Kawasawa Y."/>
            <person name="Kelso J."/>
            <person name="Kitamura H."/>
            <person name="Kitano H."/>
            <person name="Kollias G."/>
            <person name="Krishnan S.P."/>
            <person name="Kruger A."/>
            <person name="Kummerfeld S.K."/>
            <person name="Kurochkin I.V."/>
            <person name="Lareau L.F."/>
            <person name="Lazarevic D."/>
            <person name="Lipovich L."/>
            <person name="Liu J."/>
            <person name="Liuni S."/>
            <person name="McWilliam S."/>
            <person name="Madan Babu M."/>
            <person name="Madera M."/>
            <person name="Marchionni L."/>
            <person name="Matsuda H."/>
            <person name="Matsuzawa S."/>
            <person name="Miki H."/>
            <person name="Mignone F."/>
            <person name="Miyake S."/>
            <person name="Morris K."/>
            <person name="Mottagui-Tabar S."/>
            <person name="Mulder N."/>
            <person name="Nakano N."/>
            <person name="Nakauchi H."/>
            <person name="Ng P."/>
            <person name="Nilsson R."/>
            <person name="Nishiguchi S."/>
            <person name="Nishikawa S."/>
            <person name="Nori F."/>
            <person name="Ohara O."/>
            <person name="Okazaki Y."/>
            <person name="Orlando V."/>
            <person name="Pang K.C."/>
            <person name="Pavan W.J."/>
            <person name="Pavesi G."/>
            <person name="Pesole G."/>
            <person name="Petrovsky N."/>
            <person name="Piazza S."/>
            <person name="Reed J."/>
            <person name="Reid J.F."/>
            <person name="Ring B.Z."/>
            <person name="Ringwald M."/>
            <person name="Rost B."/>
            <person name="Ruan Y."/>
            <person name="Salzberg S.L."/>
            <person name="Sandelin A."/>
            <person name="Schneider C."/>
            <person name="Schoenbach C."/>
            <person name="Sekiguchi K."/>
            <person name="Semple C.A."/>
            <person name="Seno S."/>
            <person name="Sessa L."/>
            <person name="Sheng Y."/>
            <person name="Shibata Y."/>
            <person name="Shimada H."/>
            <person name="Shimada K."/>
            <person name="Silva D."/>
            <person name="Sinclair B."/>
            <person name="Sperling S."/>
            <person name="Stupka E."/>
            <person name="Sugiura K."/>
            <person name="Sultana R."/>
            <person name="Takenaka Y."/>
            <person name="Taki K."/>
            <person name="Tammoja K."/>
            <person name="Tan S.L."/>
            <person name="Tang S."/>
            <person name="Taylor M.S."/>
            <person name="Tegner J."/>
            <person name="Teichmann S.A."/>
            <person name="Ueda H.R."/>
            <person name="van Nimwegen E."/>
            <person name="Verardo R."/>
            <person name="Wei C.L."/>
            <person name="Yagi K."/>
            <person name="Yamanishi H."/>
            <person name="Zabarovsky E."/>
            <person name="Zhu S."/>
            <person name="Zimmer A."/>
            <person name="Hide W."/>
            <person name="Bult C."/>
            <person name="Grimmond S.M."/>
            <person name="Teasdale R.D."/>
            <person name="Liu E.T."/>
            <person name="Brusic V."/>
            <person name="Quackenbush J."/>
            <person name="Wahlestedt C."/>
            <person name="Mattick J.S."/>
            <person name="Hume D.A."/>
            <person name="Kai C."/>
            <person name="Sasaki D."/>
            <person name="Tomaru Y."/>
            <person name="Fukuda S."/>
            <person name="Kanamori-Katayama M."/>
            <person name="Suzuki M."/>
            <person name="Aoki J."/>
            <person name="Arakawa T."/>
            <person name="Iida J."/>
            <person name="Imamura K."/>
            <person name="Itoh M."/>
            <person name="Kato T."/>
            <person name="Kawaji H."/>
            <person name="Kawagashira N."/>
            <person name="Kawashima T."/>
            <person name="Kojima M."/>
            <person name="Kondo S."/>
            <person name="Konno H."/>
            <person name="Nakano K."/>
            <person name="Ninomiya N."/>
            <person name="Nishio T."/>
            <person name="Okada M."/>
            <person name="Plessy C."/>
            <person name="Shibata K."/>
            <person name="Shiraki T."/>
            <person name="Suzuki S."/>
            <person name="Tagami M."/>
            <person name="Waki K."/>
            <person name="Watahiki A."/>
            <person name="Okamura-Oho Y."/>
            <person name="Suzuki H."/>
            <person name="Kawai J."/>
            <person name="Hayashizaki Y."/>
        </authorList>
    </citation>
    <scope>NUCLEOTIDE SEQUENCE [LARGE SCALE MRNA] OF 243-712</scope>
    <source>
        <strain>C57BL/6J</strain>
        <tissue>Hypothalamus</tissue>
    </source>
</reference>
<reference key="4">
    <citation type="journal article" date="2003" name="DNA Res.">
        <title>Prediction of the coding sequences of mouse homologues of KIAA gene: II. The complete nucleotide sequences of 400 mouse KIAA-homologous cDNAs identified by screening of terminal sequences of cDNA clones randomly sampled from size-fractionated libraries.</title>
        <authorList>
            <person name="Okazaki N."/>
            <person name="Kikuno R."/>
            <person name="Ohara R."/>
            <person name="Inamoto S."/>
            <person name="Aizawa H."/>
            <person name="Yuasa S."/>
            <person name="Nakajima D."/>
            <person name="Nagase T."/>
            <person name="Ohara O."/>
            <person name="Koga H."/>
        </authorList>
    </citation>
    <scope>NUCLEOTIDE SEQUENCE [LARGE SCALE MRNA] OF 382-712</scope>
</reference>
<reference key="5">
    <citation type="journal article" date="2010" name="Cell">
        <title>A tissue-specific atlas of mouse protein phosphorylation and expression.</title>
        <authorList>
            <person name="Huttlin E.L."/>
            <person name="Jedrychowski M.P."/>
            <person name="Elias J.E."/>
            <person name="Goswami T."/>
            <person name="Rad R."/>
            <person name="Beausoleil S.A."/>
            <person name="Villen J."/>
            <person name="Haas W."/>
            <person name="Sowa M.E."/>
            <person name="Gygi S.P."/>
        </authorList>
    </citation>
    <scope>PHOSPHORYLATION [LARGE SCALE ANALYSIS] AT SER-26; SER-488; SER-495; SER-593 AND SER-594</scope>
    <scope>IDENTIFICATION BY MASS SPECTROMETRY [LARGE SCALE ANALYSIS]</scope>
    <source>
        <tissue>Brain</tissue>
        <tissue>Heart</tissue>
        <tissue>Pancreas</tissue>
        <tissue>Spleen</tissue>
    </source>
</reference>
<accession>Q5SVL6</accession>
<accession>Q3KNA3</accession>
<accession>Q3V3L0</accession>
<accession>Q80TL8</accession>
<organism>
    <name type="scientific">Mus musculus</name>
    <name type="common">Mouse</name>
    <dbReference type="NCBI Taxonomy" id="10090"/>
    <lineage>
        <taxon>Eukaryota</taxon>
        <taxon>Metazoa</taxon>
        <taxon>Chordata</taxon>
        <taxon>Craniata</taxon>
        <taxon>Vertebrata</taxon>
        <taxon>Euteleostomi</taxon>
        <taxon>Mammalia</taxon>
        <taxon>Eutheria</taxon>
        <taxon>Euarchontoglires</taxon>
        <taxon>Glires</taxon>
        <taxon>Rodentia</taxon>
        <taxon>Myomorpha</taxon>
        <taxon>Muroidea</taxon>
        <taxon>Muridae</taxon>
        <taxon>Murinae</taxon>
        <taxon>Mus</taxon>
        <taxon>Mus</taxon>
    </lineage>
</organism>
<feature type="chain" id="PRO_0000312717" description="Rap1 GTPase-activating protein 2">
    <location>
        <begin position="1"/>
        <end position="712"/>
    </location>
</feature>
<feature type="domain" description="Rap-GAP" evidence="3">
    <location>
        <begin position="229"/>
        <end position="445"/>
    </location>
</feature>
<feature type="region of interest" description="Disordered" evidence="4">
    <location>
        <begin position="1"/>
        <end position="33"/>
    </location>
</feature>
<feature type="region of interest" description="Disordered" evidence="4">
    <location>
        <begin position="529"/>
        <end position="712"/>
    </location>
</feature>
<feature type="compositionally biased region" description="Polar residues" evidence="4">
    <location>
        <begin position="566"/>
        <end position="594"/>
    </location>
</feature>
<feature type="compositionally biased region" description="Basic and acidic residues" evidence="4">
    <location>
        <begin position="599"/>
        <end position="612"/>
    </location>
</feature>
<feature type="compositionally biased region" description="Low complexity" evidence="4">
    <location>
        <begin position="617"/>
        <end position="629"/>
    </location>
</feature>
<feature type="compositionally biased region" description="Polar residues" evidence="4">
    <location>
        <begin position="641"/>
        <end position="652"/>
    </location>
</feature>
<feature type="compositionally biased region" description="Low complexity" evidence="4">
    <location>
        <begin position="660"/>
        <end position="669"/>
    </location>
</feature>
<feature type="compositionally biased region" description="Polar residues" evidence="4">
    <location>
        <begin position="681"/>
        <end position="694"/>
    </location>
</feature>
<feature type="modified residue" description="Phosphoserine" evidence="7">
    <location>
        <position position="26"/>
    </location>
</feature>
<feature type="modified residue" description="Phosphothreonine" evidence="2">
    <location>
        <position position="30"/>
    </location>
</feature>
<feature type="modified residue" description="Phosphoserine" evidence="7">
    <location>
        <position position="488"/>
    </location>
</feature>
<feature type="modified residue" description="Phosphoserine" evidence="7">
    <location>
        <position position="495"/>
    </location>
</feature>
<feature type="modified residue" description="Phosphoserine" evidence="2">
    <location>
        <position position="525"/>
    </location>
</feature>
<feature type="modified residue" description="Phosphoserine" evidence="2">
    <location>
        <position position="539"/>
    </location>
</feature>
<feature type="modified residue" description="Phosphoserine" evidence="2">
    <location>
        <position position="545"/>
    </location>
</feature>
<feature type="modified residue" description="Phosphoserine" evidence="7">
    <location>
        <position position="593"/>
    </location>
</feature>
<feature type="modified residue" description="Phosphoserine" evidence="7">
    <location>
        <position position="594"/>
    </location>
</feature>
<feature type="splice variant" id="VSP_029890" description="In isoform 2." evidence="5">
    <location>
        <begin position="1"/>
        <end position="194"/>
    </location>
</feature>
<feature type="splice variant" id="VSP_029952" description="In isoform 2." evidence="5">
    <original>LSKLPSVPQIAK</original>
    <variation>MVLDLCVFLPSQ</variation>
    <location>
        <begin position="195"/>
        <end position="206"/>
    </location>
</feature>
<comment type="function">
    <text evidence="1">GTPase activator for the nuclear Ras-related regulatory protein RAP-1A (KREV-1), converting it to the putatively inactive GDP-bound state.</text>
</comment>
<comment type="subcellular location">
    <subcellularLocation>
        <location evidence="1">Cytoplasm</location>
    </subcellularLocation>
</comment>
<comment type="alternative products">
    <event type="alternative splicing"/>
    <isoform>
        <id>Q5SVL6-1</id>
        <name>1</name>
        <sequence type="displayed"/>
    </isoform>
    <isoform>
        <id>Q5SVL6-2</id>
        <name>2</name>
        <sequence type="described" ref="VSP_029890 VSP_029952"/>
    </isoform>
</comment>
<comment type="sequence caution" evidence="6">
    <conflict type="erroneous initiation">
        <sequence resource="EMBL-CDS" id="BAC65706"/>
    </conflict>
    <text>Extended N-terminus.</text>
</comment>
<comment type="sequence caution" evidence="6">
    <conflict type="miscellaneous discrepancy">
        <sequence resource="EMBL-CDS" id="BAC65706"/>
    </conflict>
    <text>Contaminating sequence. Sequence of unknown origin in the N-terminal part.</text>
</comment>
<proteinExistence type="evidence at protein level"/>
<name>RPGP2_MOUSE</name>
<dbReference type="EMBL" id="AL604065">
    <property type="status" value="NOT_ANNOTATED_CDS"/>
    <property type="molecule type" value="Genomic_DNA"/>
</dbReference>
<dbReference type="EMBL" id="AL627348">
    <property type="status" value="NOT_ANNOTATED_CDS"/>
    <property type="molecule type" value="Genomic_DNA"/>
</dbReference>
<dbReference type="EMBL" id="AL645971">
    <property type="status" value="NOT_ANNOTATED_CDS"/>
    <property type="molecule type" value="Genomic_DNA"/>
</dbReference>
<dbReference type="EMBL" id="BC107388">
    <property type="protein sequence ID" value="AAI07389.1"/>
    <property type="molecule type" value="mRNA"/>
</dbReference>
<dbReference type="EMBL" id="AK038834">
    <property type="protein sequence ID" value="BAE20542.1"/>
    <property type="molecule type" value="mRNA"/>
</dbReference>
<dbReference type="EMBL" id="AK122424">
    <property type="protein sequence ID" value="BAC65706.1"/>
    <property type="status" value="ALT_SEQ"/>
    <property type="molecule type" value="mRNA"/>
</dbReference>
<dbReference type="CCDS" id="CCDS25032.1">
    <molecule id="Q5SVL6-1"/>
</dbReference>
<dbReference type="RefSeq" id="NP_001015046.1">
    <molecule id="Q5SVL6-1"/>
    <property type="nucleotide sequence ID" value="NM_001015046.3"/>
</dbReference>
<dbReference type="SMR" id="Q5SVL6"/>
<dbReference type="BioGRID" id="237610">
    <property type="interactions" value="5"/>
</dbReference>
<dbReference type="FunCoup" id="Q5SVL6">
    <property type="interactions" value="397"/>
</dbReference>
<dbReference type="STRING" id="10090.ENSMUSP00000099580"/>
<dbReference type="GlyGen" id="Q5SVL6">
    <property type="glycosylation" value="1 site, 1 O-linked glycan (1 site)"/>
</dbReference>
<dbReference type="iPTMnet" id="Q5SVL6"/>
<dbReference type="PhosphoSitePlus" id="Q5SVL6"/>
<dbReference type="SwissPalm" id="Q5SVL6"/>
<dbReference type="PaxDb" id="10090-ENSMUSP00000099580"/>
<dbReference type="PeptideAtlas" id="Q5SVL6"/>
<dbReference type="ProteomicsDB" id="260933">
    <molecule id="Q5SVL6-1"/>
</dbReference>
<dbReference type="ProteomicsDB" id="260934">
    <molecule id="Q5SVL6-2"/>
</dbReference>
<dbReference type="Antibodypedia" id="5443">
    <property type="antibodies" value="30 antibodies from 14 providers"/>
</dbReference>
<dbReference type="DNASU" id="380711"/>
<dbReference type="Ensembl" id="ENSMUST00000102521.9">
    <molecule id="Q5SVL6-1"/>
    <property type="protein sequence ID" value="ENSMUSP00000099580.2"/>
    <property type="gene ID" value="ENSMUSG00000038807.20"/>
</dbReference>
<dbReference type="GeneID" id="380711"/>
<dbReference type="KEGG" id="mmu:380711"/>
<dbReference type="UCSC" id="uc007kbw.1">
    <molecule id="Q5SVL6-2"/>
    <property type="organism name" value="mouse"/>
</dbReference>
<dbReference type="UCSC" id="uc007kbx.1">
    <molecule id="Q5SVL6-1"/>
    <property type="organism name" value="mouse"/>
</dbReference>
<dbReference type="AGR" id="MGI:3028623"/>
<dbReference type="CTD" id="23108"/>
<dbReference type="MGI" id="MGI:3028623">
    <property type="gene designation" value="Rap1gap2"/>
</dbReference>
<dbReference type="VEuPathDB" id="HostDB:ENSMUSG00000038807"/>
<dbReference type="eggNOG" id="KOG3686">
    <property type="taxonomic scope" value="Eukaryota"/>
</dbReference>
<dbReference type="GeneTree" id="ENSGT00940000160935"/>
<dbReference type="HOGENOM" id="CLU_010739_2_2_1"/>
<dbReference type="InParanoid" id="Q5SVL6"/>
<dbReference type="OrthoDB" id="2499658at2759"/>
<dbReference type="PhylomeDB" id="Q5SVL6"/>
<dbReference type="TreeFam" id="TF318626"/>
<dbReference type="Reactome" id="R-MMU-392517">
    <property type="pathway name" value="Rap1 signalling"/>
</dbReference>
<dbReference type="BioGRID-ORCS" id="380711">
    <property type="hits" value="4 hits in 76 CRISPR screens"/>
</dbReference>
<dbReference type="ChiTaRS" id="Rap1gap2">
    <property type="organism name" value="mouse"/>
</dbReference>
<dbReference type="PRO" id="PR:Q5SVL6"/>
<dbReference type="Proteomes" id="UP000000589">
    <property type="component" value="Chromosome 11"/>
</dbReference>
<dbReference type="RNAct" id="Q5SVL6">
    <property type="molecule type" value="protein"/>
</dbReference>
<dbReference type="Bgee" id="ENSMUSG00000038807">
    <property type="expression patterns" value="Expressed in dorsal pancreas and 196 other cell types or tissues"/>
</dbReference>
<dbReference type="ExpressionAtlas" id="Q5SVL6">
    <property type="expression patterns" value="baseline and differential"/>
</dbReference>
<dbReference type="GO" id="GO:0005737">
    <property type="term" value="C:cytoplasm"/>
    <property type="evidence" value="ECO:0000314"/>
    <property type="project" value="MGI"/>
</dbReference>
<dbReference type="GO" id="GO:0043005">
    <property type="term" value="C:neuron projection"/>
    <property type="evidence" value="ECO:0000314"/>
    <property type="project" value="MGI"/>
</dbReference>
<dbReference type="GO" id="GO:0005096">
    <property type="term" value="F:GTPase activator activity"/>
    <property type="evidence" value="ECO:0000314"/>
    <property type="project" value="MGI"/>
</dbReference>
<dbReference type="GO" id="GO:0010977">
    <property type="term" value="P:negative regulation of neuron projection development"/>
    <property type="evidence" value="ECO:0000314"/>
    <property type="project" value="MGI"/>
</dbReference>
<dbReference type="GO" id="GO:0051056">
    <property type="term" value="P:regulation of small GTPase mediated signal transduction"/>
    <property type="evidence" value="ECO:0007669"/>
    <property type="project" value="InterPro"/>
</dbReference>
<dbReference type="FunFam" id="3.40.50.11210:FF:000003">
    <property type="entry name" value="RAP1 GTPase activating protein 2"/>
    <property type="match status" value="1"/>
</dbReference>
<dbReference type="Gene3D" id="6.10.140.210">
    <property type="match status" value="1"/>
</dbReference>
<dbReference type="Gene3D" id="3.40.50.11210">
    <property type="entry name" value="Rap/Ran-GAP"/>
    <property type="match status" value="1"/>
</dbReference>
<dbReference type="InterPro" id="IPR035974">
    <property type="entry name" value="Rap/Ran-GAP_sf"/>
</dbReference>
<dbReference type="InterPro" id="IPR000331">
    <property type="entry name" value="Rap/Ran_GAP_dom"/>
</dbReference>
<dbReference type="InterPro" id="IPR050989">
    <property type="entry name" value="Rap1_Ran_GAP"/>
</dbReference>
<dbReference type="PANTHER" id="PTHR15711">
    <property type="entry name" value="RAP GTPASE-ACTIVATING PROTEIN"/>
    <property type="match status" value="1"/>
</dbReference>
<dbReference type="PANTHER" id="PTHR15711:SF17">
    <property type="entry name" value="RAP1 GTPASE-ACTIVATING PROTEIN 2"/>
    <property type="match status" value="1"/>
</dbReference>
<dbReference type="Pfam" id="PF21022">
    <property type="entry name" value="Rap-GAP_dimer"/>
    <property type="match status" value="1"/>
</dbReference>
<dbReference type="Pfam" id="PF02145">
    <property type="entry name" value="Rap_GAP"/>
    <property type="match status" value="1"/>
</dbReference>
<dbReference type="SUPFAM" id="SSF111347">
    <property type="entry name" value="Rap/Ran-GAP"/>
    <property type="match status" value="1"/>
</dbReference>
<dbReference type="PROSITE" id="PS50085">
    <property type="entry name" value="RAPGAP"/>
    <property type="match status" value="1"/>
</dbReference>
<evidence type="ECO:0000250" key="1"/>
<evidence type="ECO:0000250" key="2">
    <source>
        <dbReference type="UniProtKB" id="Q684P5"/>
    </source>
</evidence>
<evidence type="ECO:0000255" key="3">
    <source>
        <dbReference type="PROSITE-ProRule" id="PRU00165"/>
    </source>
</evidence>
<evidence type="ECO:0000256" key="4">
    <source>
        <dbReference type="SAM" id="MobiDB-lite"/>
    </source>
</evidence>
<evidence type="ECO:0000303" key="5">
    <source>
    </source>
</evidence>
<evidence type="ECO:0000305" key="6"/>
<evidence type="ECO:0007744" key="7">
    <source>
    </source>
</evidence>
<gene>
    <name type="primary">Rap1gap2</name>
    <name type="synonym">Garnl4</name>
    <name type="synonym">Kiaa1039</name>
    <name type="synonym">Rap1ga2</name>
</gene>
<sequence>MLAGLKVKKQELANSSDVTLPDRPLSPPLTAPPTMKSAEFFEMLEKMQGIKLEEQRPGPQKNKDDYIPYPSIDEVVEKGGPYPLIILPQFGGYWIEDPENVGTPTSLGSSVYEEEEEDSLSPNTFGYKLECRGEARAYRRHFLGKDHLNFYCTGSSLGNLILSIKCEEAEGMEYLRIILRSKLKTVHERIPLAGLSKLPSVPQIAKAFCDDAVGLKFNPVLYPKASQMIVSYDEHDVNNTFKFGVIYQKARQTLEEELFGNNEESPAFKEFLDLLGDTITLQDFKGFRGGLDVTHGQTGVESVYTTFRDREIMFHVSTKLPFTDGDTQQLQRKRHIGNDIVAIIFQEENTPFVPDMIASNFLHAYIVVQADNPGTETPSYKVSVTAREDVPAFGPPLPSPPVFQKGAEFREFLLTKLTNAENACCKSDKFAKLEDRTRAALLDNLHDELHTHTQVMLGMGPEEDKFENGGHGGFLESFKRAIRVRSHSMETMVGSQRKLHGGNLPGSLSGGIVHNSMEVTKTTFSPPVAAATAKNQSRSPIKRRSGLFPRLHSGSEGQGDSRTRCDSASSTPKTPDGGHSSQEIKSETSSNPSSPEICPNKEKPFIKLKENGRANISRSSSSTSSFSSTAGEGEAMEECDSGSSQPSTTSPFKQEVFAYSPSPSSESPSLGAAATPIIMSRSPTDAKSRNSPRSNLKFRFDKLSHASSSAGH</sequence>
<protein>
    <recommendedName>
        <fullName>Rap1 GTPase-activating protein 2</fullName>
        <shortName>Rap1GAP2</shortName>
    </recommendedName>
    <alternativeName>
        <fullName>GTPase-activating Rap/Ran-GAP domain-like protein 4</fullName>
    </alternativeName>
</protein>